<gene>
    <name type="primary">lpsC</name>
    <name type="ordered locus">R01569</name>
    <name type="ORF">SMc01222</name>
</gene>
<accession>Q9R9M9</accession>
<evidence type="ECO:0000305" key="1"/>
<comment type="pathway">
    <text>Bacterial outer membrane biogenesis; LPS core biosynthesis.</text>
</comment>
<comment type="similarity">
    <text evidence="1">Belongs to the glycosyltransferase 2 family. WaaE/KdtX subfamily.</text>
</comment>
<comment type="sequence caution" evidence="1">
    <conflict type="erroneous initiation">
        <sequence resource="EMBL-CDS" id="AAF06011"/>
    </conflict>
</comment>
<dbReference type="EC" id="2.4.-.-"/>
<dbReference type="EMBL" id="AF193023">
    <property type="protein sequence ID" value="AAF06011.1"/>
    <property type="status" value="ALT_INIT"/>
    <property type="molecule type" value="Genomic_DNA"/>
</dbReference>
<dbReference type="EMBL" id="AL591688">
    <property type="protein sequence ID" value="CAC46148.1"/>
    <property type="molecule type" value="Genomic_DNA"/>
</dbReference>
<dbReference type="RefSeq" id="NP_385675.1">
    <property type="nucleotide sequence ID" value="NC_003047.1"/>
</dbReference>
<dbReference type="RefSeq" id="WP_010969309.1">
    <property type="nucleotide sequence ID" value="NC_003047.1"/>
</dbReference>
<dbReference type="SMR" id="Q9R9M9"/>
<dbReference type="CAZy" id="GT2">
    <property type="family name" value="Glycosyltransferase Family 2"/>
</dbReference>
<dbReference type="EnsemblBacteria" id="CAC46148">
    <property type="protein sequence ID" value="CAC46148"/>
    <property type="gene ID" value="SMc01222"/>
</dbReference>
<dbReference type="KEGG" id="sme:SMc01222"/>
<dbReference type="PATRIC" id="fig|266834.11.peg.2995"/>
<dbReference type="eggNOG" id="COG0463">
    <property type="taxonomic scope" value="Bacteria"/>
</dbReference>
<dbReference type="HOGENOM" id="CLU_065962_1_0_5"/>
<dbReference type="OrthoDB" id="9815923at2"/>
<dbReference type="UniPathway" id="UPA00958"/>
<dbReference type="Proteomes" id="UP000001976">
    <property type="component" value="Chromosome"/>
</dbReference>
<dbReference type="GO" id="GO:0016757">
    <property type="term" value="F:glycosyltransferase activity"/>
    <property type="evidence" value="ECO:0007669"/>
    <property type="project" value="UniProtKB-KW"/>
</dbReference>
<dbReference type="GO" id="GO:0009244">
    <property type="term" value="P:lipopolysaccharide core region biosynthetic process"/>
    <property type="evidence" value="ECO:0007669"/>
    <property type="project" value="UniProtKB-UniPathway"/>
</dbReference>
<dbReference type="CDD" id="cd02511">
    <property type="entry name" value="Beta4Glucosyltransferase"/>
    <property type="match status" value="1"/>
</dbReference>
<dbReference type="Gene3D" id="3.90.550.10">
    <property type="entry name" value="Spore Coat Polysaccharide Biosynthesis Protein SpsA, Chain A"/>
    <property type="match status" value="1"/>
</dbReference>
<dbReference type="InterPro" id="IPR001173">
    <property type="entry name" value="Glyco_trans_2-like"/>
</dbReference>
<dbReference type="InterPro" id="IPR029044">
    <property type="entry name" value="Nucleotide-diphossugar_trans"/>
</dbReference>
<dbReference type="PANTHER" id="PTHR43630:SF2">
    <property type="entry name" value="GLYCOSYLTRANSFERASE"/>
    <property type="match status" value="1"/>
</dbReference>
<dbReference type="PANTHER" id="PTHR43630">
    <property type="entry name" value="POLY-BETA-1,6-N-ACETYL-D-GLUCOSAMINE SYNTHASE"/>
    <property type="match status" value="1"/>
</dbReference>
<dbReference type="Pfam" id="PF00535">
    <property type="entry name" value="Glycos_transf_2"/>
    <property type="match status" value="1"/>
</dbReference>
<dbReference type="SUPFAM" id="SSF53448">
    <property type="entry name" value="Nucleotide-diphospho-sugar transferases"/>
    <property type="match status" value="1"/>
</dbReference>
<organism>
    <name type="scientific">Rhizobium meliloti (strain 1021)</name>
    <name type="common">Ensifer meliloti</name>
    <name type="synonym">Sinorhizobium meliloti</name>
    <dbReference type="NCBI Taxonomy" id="266834"/>
    <lineage>
        <taxon>Bacteria</taxon>
        <taxon>Pseudomonadati</taxon>
        <taxon>Pseudomonadota</taxon>
        <taxon>Alphaproteobacteria</taxon>
        <taxon>Hyphomicrobiales</taxon>
        <taxon>Rhizobiaceae</taxon>
        <taxon>Sinorhizobium/Ensifer group</taxon>
        <taxon>Sinorhizobium</taxon>
    </lineage>
</organism>
<keyword id="KW-0328">Glycosyltransferase</keyword>
<keyword id="KW-0448">Lipopolysaccharide biosynthesis</keyword>
<keyword id="KW-1185">Reference proteome</keyword>
<keyword id="KW-0808">Transferase</keyword>
<feature type="chain" id="PRO_0000059221" description="Lipopolysaccharide core biosynthesis glycosyltransferase LpsC">
    <location>
        <begin position="1"/>
        <end position="270"/>
    </location>
</feature>
<feature type="sequence conflict" description="In Ref. 1; AAF06011." evidence="1" ref="1">
    <original>ALKARPNVDDALSH</original>
    <variation>VSEGAPECG</variation>
    <location>
        <begin position="257"/>
        <end position="270"/>
    </location>
</feature>
<proteinExistence type="inferred from homology"/>
<protein>
    <recommendedName>
        <fullName>Lipopolysaccharide core biosynthesis glycosyltransferase LpsC</fullName>
        <ecNumber>2.4.-.-</ecNumber>
    </recommendedName>
</protein>
<name>LPSC_RHIME</name>
<sequence>MIPKLPLSAFIICLNEEAYLGKCIESLERCAEIVIVDSGSTDGTAALVQSYIDAGWPIRFMYEPWRGYAGQKQFALEQCSQPWCFNIDADERLDKALRELLPELLAASDEIVGWRVARRPYLIGYGYTPENVRERRNLRLIRRGKGRYDLSQKVHEGIVPEGNVGNARTGSLLHFRPLVMDEQILKENKYSTLKADQQVESGKRPRFYKLIFTPPIYFLRLYFRNGLWRCGLSGFIEAMTGAVYAFLTAAKIYQRHALKARPNVDDALSH</sequence>
<reference key="1">
    <citation type="journal article" date="2001" name="J. Bacteriol.">
        <title>Genetic characterization of a Sinorhizobium meliloti chromosomal region involved in lipopolysaccharide biosynthesis.</title>
        <authorList>
            <person name="Lagares A."/>
            <person name="Hozbor D.F."/>
            <person name="Niehaus K."/>
            <person name="Pich Otero A.J.L."/>
            <person name="Lorenzen J."/>
            <person name="Arnold W."/>
            <person name="Puehler A."/>
        </authorList>
    </citation>
    <scope>NUCLEOTIDE SEQUENCE [GENOMIC DNA]</scope>
    <source>
        <strain>RCR2011 / SU47</strain>
    </source>
</reference>
<reference key="2">
    <citation type="journal article" date="2001" name="Proc. Natl. Acad. Sci. U.S.A.">
        <title>Analysis of the chromosome sequence of the legume symbiont Sinorhizobium meliloti strain 1021.</title>
        <authorList>
            <person name="Capela D."/>
            <person name="Barloy-Hubler F."/>
            <person name="Gouzy J."/>
            <person name="Bothe G."/>
            <person name="Ampe F."/>
            <person name="Batut J."/>
            <person name="Boistard P."/>
            <person name="Becker A."/>
            <person name="Boutry M."/>
            <person name="Cadieu E."/>
            <person name="Dreano S."/>
            <person name="Gloux S."/>
            <person name="Godrie T."/>
            <person name="Goffeau A."/>
            <person name="Kahn D."/>
            <person name="Kiss E."/>
            <person name="Lelaure V."/>
            <person name="Masuy D."/>
            <person name="Pohl T."/>
            <person name="Portetelle D."/>
            <person name="Puehler A."/>
            <person name="Purnelle B."/>
            <person name="Ramsperger U."/>
            <person name="Renard C."/>
            <person name="Thebault P."/>
            <person name="Vandenbol M."/>
            <person name="Weidner S."/>
            <person name="Galibert F."/>
        </authorList>
    </citation>
    <scope>NUCLEOTIDE SEQUENCE [LARGE SCALE GENOMIC DNA]</scope>
    <source>
        <strain>1021</strain>
    </source>
</reference>
<reference key="3">
    <citation type="journal article" date="2001" name="Science">
        <title>The composite genome of the legume symbiont Sinorhizobium meliloti.</title>
        <authorList>
            <person name="Galibert F."/>
            <person name="Finan T.M."/>
            <person name="Long S.R."/>
            <person name="Puehler A."/>
            <person name="Abola P."/>
            <person name="Ampe F."/>
            <person name="Barloy-Hubler F."/>
            <person name="Barnett M.J."/>
            <person name="Becker A."/>
            <person name="Boistard P."/>
            <person name="Bothe G."/>
            <person name="Boutry M."/>
            <person name="Bowser L."/>
            <person name="Buhrmester J."/>
            <person name="Cadieu E."/>
            <person name="Capela D."/>
            <person name="Chain P."/>
            <person name="Cowie A."/>
            <person name="Davis R.W."/>
            <person name="Dreano S."/>
            <person name="Federspiel N.A."/>
            <person name="Fisher R.F."/>
            <person name="Gloux S."/>
            <person name="Godrie T."/>
            <person name="Goffeau A."/>
            <person name="Golding B."/>
            <person name="Gouzy J."/>
            <person name="Gurjal M."/>
            <person name="Hernandez-Lucas I."/>
            <person name="Hong A."/>
            <person name="Huizar L."/>
            <person name="Hyman R.W."/>
            <person name="Jones T."/>
            <person name="Kahn D."/>
            <person name="Kahn M.L."/>
            <person name="Kalman S."/>
            <person name="Keating D.H."/>
            <person name="Kiss E."/>
            <person name="Komp C."/>
            <person name="Lelaure V."/>
            <person name="Masuy D."/>
            <person name="Palm C."/>
            <person name="Peck M.C."/>
            <person name="Pohl T.M."/>
            <person name="Portetelle D."/>
            <person name="Purnelle B."/>
            <person name="Ramsperger U."/>
            <person name="Surzycki R."/>
            <person name="Thebault P."/>
            <person name="Vandenbol M."/>
            <person name="Vorhoelter F.J."/>
            <person name="Weidner S."/>
            <person name="Wells D.H."/>
            <person name="Wong K."/>
            <person name="Yeh K.-C."/>
            <person name="Batut J."/>
        </authorList>
    </citation>
    <scope>NUCLEOTIDE SEQUENCE [LARGE SCALE GENOMIC DNA]</scope>
    <source>
        <strain>1021</strain>
    </source>
</reference>